<dbReference type="EMBL" id="AF009366">
    <property type="protein sequence ID" value="AAB71663.1"/>
    <property type="molecule type" value="mRNA"/>
</dbReference>
<dbReference type="EMBL" id="AK030985">
    <property type="protein sequence ID" value="BAC27203.1"/>
    <property type="molecule type" value="mRNA"/>
</dbReference>
<dbReference type="EMBL" id="AK033729">
    <property type="protein sequence ID" value="BAC28451.1"/>
    <property type="molecule type" value="mRNA"/>
</dbReference>
<dbReference type="EMBL" id="AK046357">
    <property type="protein sequence ID" value="BAC32689.1"/>
    <property type="molecule type" value="mRNA"/>
</dbReference>
<dbReference type="EMBL" id="AK054179">
    <property type="protein sequence ID" value="BAC35682.1"/>
    <property type="molecule type" value="mRNA"/>
</dbReference>
<dbReference type="EMBL" id="AK083374">
    <property type="protein sequence ID" value="BAC38890.1"/>
    <property type="molecule type" value="mRNA"/>
</dbReference>
<dbReference type="EMBL" id="BC004696">
    <property type="protein sequence ID" value="AAH04696.1"/>
    <property type="molecule type" value="mRNA"/>
</dbReference>
<dbReference type="EMBL" id="BC053713">
    <property type="protein sequence ID" value="AAH53713.1"/>
    <property type="molecule type" value="mRNA"/>
</dbReference>
<dbReference type="CCDS" id="CCDS49247.1"/>
<dbReference type="RefSeq" id="NP_001104794.1">
    <property type="nucleotide sequence ID" value="NM_001111324.2"/>
</dbReference>
<dbReference type="RefSeq" id="NP_059492.3">
    <property type="nucleotide sequence ID" value="NM_017464.5"/>
</dbReference>
<dbReference type="SMR" id="O35177"/>
<dbReference type="BioGRID" id="201726">
    <property type="interactions" value="7"/>
</dbReference>
<dbReference type="DIP" id="DIP-57058N"/>
<dbReference type="FunCoup" id="O35177">
    <property type="interactions" value="1026"/>
</dbReference>
<dbReference type="IntAct" id="O35177">
    <property type="interactions" value="6"/>
</dbReference>
<dbReference type="STRING" id="10090.ENSMUSP00000021794"/>
<dbReference type="GlyGen" id="O35177">
    <property type="glycosylation" value="1 site"/>
</dbReference>
<dbReference type="iPTMnet" id="O35177"/>
<dbReference type="PhosphoSitePlus" id="O35177"/>
<dbReference type="PaxDb" id="10090-ENSMUSP00000021794"/>
<dbReference type="PeptideAtlas" id="O35177"/>
<dbReference type="ProteomicsDB" id="279912"/>
<dbReference type="Pumba" id="O35177"/>
<dbReference type="Antibodypedia" id="10092">
    <property type="antibodies" value="358 antibodies from 37 providers"/>
</dbReference>
<dbReference type="DNASU" id="18003"/>
<dbReference type="Ensembl" id="ENSMUST00000021794.14">
    <property type="protein sequence ID" value="ENSMUSP00000021794.7"/>
    <property type="gene ID" value="ENSMUSG00000021365.16"/>
</dbReference>
<dbReference type="GeneID" id="18003"/>
<dbReference type="KEGG" id="mmu:18003"/>
<dbReference type="UCSC" id="uc007qfd.2">
    <property type="organism name" value="mouse"/>
</dbReference>
<dbReference type="AGR" id="MGI:97302"/>
<dbReference type="CTD" id="4739"/>
<dbReference type="MGI" id="MGI:97302">
    <property type="gene designation" value="Nedd9"/>
</dbReference>
<dbReference type="VEuPathDB" id="HostDB:ENSMUSG00000021365"/>
<dbReference type="eggNOG" id="ENOG502QQHE">
    <property type="taxonomic scope" value="Eukaryota"/>
</dbReference>
<dbReference type="GeneTree" id="ENSGT00950000183008"/>
<dbReference type="InParanoid" id="O35177"/>
<dbReference type="OrthoDB" id="5983572at2759"/>
<dbReference type="PhylomeDB" id="O35177"/>
<dbReference type="TreeFam" id="TF328782"/>
<dbReference type="BioGRID-ORCS" id="18003">
    <property type="hits" value="3 hits in 77 CRISPR screens"/>
</dbReference>
<dbReference type="ChiTaRS" id="Nedd9">
    <property type="organism name" value="mouse"/>
</dbReference>
<dbReference type="PRO" id="PR:O35177"/>
<dbReference type="Proteomes" id="UP000000589">
    <property type="component" value="Chromosome 13"/>
</dbReference>
<dbReference type="RNAct" id="O35177">
    <property type="molecule type" value="protein"/>
</dbReference>
<dbReference type="Bgee" id="ENSMUSG00000021365">
    <property type="expression patterns" value="Expressed in cumulus cell and 318 other cell types or tissues"/>
</dbReference>
<dbReference type="ExpressionAtlas" id="O35177">
    <property type="expression patterns" value="baseline and differential"/>
</dbReference>
<dbReference type="GO" id="GO:0016323">
    <property type="term" value="C:basolateral plasma membrane"/>
    <property type="evidence" value="ECO:0000250"/>
    <property type="project" value="UniProtKB"/>
</dbReference>
<dbReference type="GO" id="GO:0005938">
    <property type="term" value="C:cell cortex"/>
    <property type="evidence" value="ECO:0007669"/>
    <property type="project" value="UniProtKB-SubCell"/>
</dbReference>
<dbReference type="GO" id="GO:0036064">
    <property type="term" value="C:ciliary basal body"/>
    <property type="evidence" value="ECO:0000250"/>
    <property type="project" value="UniProtKB"/>
</dbReference>
<dbReference type="GO" id="GO:0005829">
    <property type="term" value="C:cytosol"/>
    <property type="evidence" value="ECO:0007669"/>
    <property type="project" value="Ensembl"/>
</dbReference>
<dbReference type="GO" id="GO:0005925">
    <property type="term" value="C:focal adhesion"/>
    <property type="evidence" value="ECO:0007669"/>
    <property type="project" value="UniProtKB-SubCell"/>
</dbReference>
<dbReference type="GO" id="GO:0005794">
    <property type="term" value="C:Golgi apparatus"/>
    <property type="evidence" value="ECO:0007669"/>
    <property type="project" value="UniProtKB-SubCell"/>
</dbReference>
<dbReference type="GO" id="GO:0001772">
    <property type="term" value="C:immunological synapse"/>
    <property type="evidence" value="ECO:0000314"/>
    <property type="project" value="UniProtKB"/>
</dbReference>
<dbReference type="GO" id="GO:0030027">
    <property type="term" value="C:lamellipodium"/>
    <property type="evidence" value="ECO:0007669"/>
    <property type="project" value="UniProtKB-SubCell"/>
</dbReference>
<dbReference type="GO" id="GO:0072686">
    <property type="term" value="C:mitotic spindle"/>
    <property type="evidence" value="ECO:0000250"/>
    <property type="project" value="UniProtKB"/>
</dbReference>
<dbReference type="GO" id="GO:0005654">
    <property type="term" value="C:nucleoplasm"/>
    <property type="evidence" value="ECO:0007669"/>
    <property type="project" value="Ensembl"/>
</dbReference>
<dbReference type="GO" id="GO:0005634">
    <property type="term" value="C:nucleus"/>
    <property type="evidence" value="ECO:0000314"/>
    <property type="project" value="MGI"/>
</dbReference>
<dbReference type="GO" id="GO:0000922">
    <property type="term" value="C:spindle pole"/>
    <property type="evidence" value="ECO:0000314"/>
    <property type="project" value="MGI"/>
</dbReference>
<dbReference type="GO" id="GO:1990782">
    <property type="term" value="F:protein tyrosine kinase binding"/>
    <property type="evidence" value="ECO:0007669"/>
    <property type="project" value="Ensembl"/>
</dbReference>
<dbReference type="GO" id="GO:0007155">
    <property type="term" value="P:cell adhesion"/>
    <property type="evidence" value="ECO:0007669"/>
    <property type="project" value="UniProtKB-KW"/>
</dbReference>
<dbReference type="GO" id="GO:0051301">
    <property type="term" value="P:cell division"/>
    <property type="evidence" value="ECO:0007669"/>
    <property type="project" value="UniProtKB-KW"/>
</dbReference>
<dbReference type="GO" id="GO:0061523">
    <property type="term" value="P:cilium disassembly"/>
    <property type="evidence" value="ECO:0000250"/>
    <property type="project" value="UniProtKB"/>
</dbReference>
<dbReference type="GO" id="GO:0007611">
    <property type="term" value="P:learning or memory"/>
    <property type="evidence" value="ECO:0000315"/>
    <property type="project" value="UniProtKB"/>
</dbReference>
<dbReference type="GO" id="GO:0097021">
    <property type="term" value="P:lymphocyte migration into lymphoid organs"/>
    <property type="evidence" value="ECO:0000315"/>
    <property type="project" value="UniProtKB"/>
</dbReference>
<dbReference type="GO" id="GO:0030336">
    <property type="term" value="P:negative regulation of cell migration"/>
    <property type="evidence" value="ECO:0000315"/>
    <property type="project" value="UniProtKB"/>
</dbReference>
<dbReference type="GO" id="GO:0030335">
    <property type="term" value="P:positive regulation of cell migration"/>
    <property type="evidence" value="ECO:0000250"/>
    <property type="project" value="UniProtKB"/>
</dbReference>
<dbReference type="GO" id="GO:1902952">
    <property type="term" value="P:positive regulation of dendritic spine maintenance"/>
    <property type="evidence" value="ECO:0000315"/>
    <property type="project" value="UniProtKB"/>
</dbReference>
<dbReference type="GO" id="GO:2000522">
    <property type="term" value="P:positive regulation of immunological synapse formation"/>
    <property type="evidence" value="ECO:0000315"/>
    <property type="project" value="UniProtKB"/>
</dbReference>
<dbReference type="GO" id="GO:0140131">
    <property type="term" value="P:positive regulation of lymphocyte chemotaxis"/>
    <property type="evidence" value="ECO:0000315"/>
    <property type="project" value="UniProtKB"/>
</dbReference>
<dbReference type="GO" id="GO:0045672">
    <property type="term" value="P:positive regulation of osteoclast differentiation"/>
    <property type="evidence" value="ECO:0000315"/>
    <property type="project" value="UniProtKB"/>
</dbReference>
<dbReference type="GO" id="GO:1903829">
    <property type="term" value="P:positive regulation of protein localization"/>
    <property type="evidence" value="ECO:0000315"/>
    <property type="project" value="UniProtKB"/>
</dbReference>
<dbReference type="GO" id="GO:0061098">
    <property type="term" value="P:positive regulation of protein tyrosine kinase activity"/>
    <property type="evidence" value="ECO:0000250"/>
    <property type="project" value="UniProtKB"/>
</dbReference>
<dbReference type="GO" id="GO:1900026">
    <property type="term" value="P:positive regulation of substrate adhesion-dependent cell spreading"/>
    <property type="evidence" value="ECO:0000250"/>
    <property type="project" value="UniProtKB"/>
</dbReference>
<dbReference type="GO" id="GO:0032956">
    <property type="term" value="P:regulation of actin cytoskeleton organization"/>
    <property type="evidence" value="ECO:0000315"/>
    <property type="project" value="UniProtKB"/>
</dbReference>
<dbReference type="CDD" id="cd11570">
    <property type="entry name" value="FAT-like_NEDD9_C"/>
    <property type="match status" value="1"/>
</dbReference>
<dbReference type="CDD" id="cd11550">
    <property type="entry name" value="Serine_rich_NEDD9"/>
    <property type="match status" value="1"/>
</dbReference>
<dbReference type="CDD" id="cd12002">
    <property type="entry name" value="SH3_NEDD9"/>
    <property type="match status" value="1"/>
</dbReference>
<dbReference type="FunFam" id="1.20.120.230:FF:000001">
    <property type="entry name" value="Breast cancer anti-estrogen resistance 1"/>
    <property type="match status" value="1"/>
</dbReference>
<dbReference type="FunFam" id="2.30.30.40:FF:000009">
    <property type="entry name" value="Breast cancer anti-estrogen resistance 1"/>
    <property type="match status" value="1"/>
</dbReference>
<dbReference type="FunFam" id="1.20.120.830:FF:000002">
    <property type="entry name" value="Neural cell expressed, developmentally down-regulated 9"/>
    <property type="match status" value="1"/>
</dbReference>
<dbReference type="Gene3D" id="1.20.120.230">
    <property type="entry name" value="Alpha-catenin/vinculin-like"/>
    <property type="match status" value="1"/>
</dbReference>
<dbReference type="Gene3D" id="1.20.120.830">
    <property type="entry name" value="Serine-rich domain"/>
    <property type="match status" value="1"/>
</dbReference>
<dbReference type="Gene3D" id="2.30.30.40">
    <property type="entry name" value="SH3 Domains"/>
    <property type="match status" value="1"/>
</dbReference>
<dbReference type="InterPro" id="IPR021901">
    <property type="entry name" value="CAS_C"/>
</dbReference>
<dbReference type="InterPro" id="IPR037362">
    <property type="entry name" value="CAS_fam"/>
</dbReference>
<dbReference type="InterPro" id="IPR035746">
    <property type="entry name" value="NEDD9_SH3"/>
</dbReference>
<dbReference type="InterPro" id="IPR014928">
    <property type="entry name" value="Serine_rich_dom"/>
</dbReference>
<dbReference type="InterPro" id="IPR038319">
    <property type="entry name" value="Serine_rich_sf"/>
</dbReference>
<dbReference type="InterPro" id="IPR036028">
    <property type="entry name" value="SH3-like_dom_sf"/>
</dbReference>
<dbReference type="InterPro" id="IPR001452">
    <property type="entry name" value="SH3_domain"/>
</dbReference>
<dbReference type="PANTHER" id="PTHR10654">
    <property type="entry name" value="CAS SCAFFOLDING PROTEIN"/>
    <property type="match status" value="1"/>
</dbReference>
<dbReference type="PANTHER" id="PTHR10654:SF20">
    <property type="entry name" value="ENHANCER OF FILAMENTATION 1"/>
    <property type="match status" value="1"/>
</dbReference>
<dbReference type="Pfam" id="PF12026">
    <property type="entry name" value="CAS_C"/>
    <property type="match status" value="1"/>
</dbReference>
<dbReference type="Pfam" id="PF08824">
    <property type="entry name" value="Serine_rich"/>
    <property type="match status" value="1"/>
</dbReference>
<dbReference type="Pfam" id="PF14604">
    <property type="entry name" value="SH3_9"/>
    <property type="match status" value="1"/>
</dbReference>
<dbReference type="SMART" id="SM00326">
    <property type="entry name" value="SH3"/>
    <property type="match status" value="1"/>
</dbReference>
<dbReference type="SUPFAM" id="SSF50044">
    <property type="entry name" value="SH3-domain"/>
    <property type="match status" value="1"/>
</dbReference>
<dbReference type="PROSITE" id="PS50002">
    <property type="entry name" value="SH3"/>
    <property type="match status" value="1"/>
</dbReference>
<reference key="1">
    <citation type="submission" date="1997-06" db="EMBL/GenBank/DDBJ databases">
        <authorList>
            <person name="Harvey K.F."/>
            <person name="Fitter S."/>
            <person name="Kumar S."/>
        </authorList>
    </citation>
    <scope>NUCLEOTIDE SEQUENCE [MRNA]</scope>
    <source>
        <tissue>Spleen</tissue>
    </source>
</reference>
<reference key="2">
    <citation type="journal article" date="2005" name="Science">
        <title>The transcriptional landscape of the mammalian genome.</title>
        <authorList>
            <person name="Carninci P."/>
            <person name="Kasukawa T."/>
            <person name="Katayama S."/>
            <person name="Gough J."/>
            <person name="Frith M.C."/>
            <person name="Maeda N."/>
            <person name="Oyama R."/>
            <person name="Ravasi T."/>
            <person name="Lenhard B."/>
            <person name="Wells C."/>
            <person name="Kodzius R."/>
            <person name="Shimokawa K."/>
            <person name="Bajic V.B."/>
            <person name="Brenner S.E."/>
            <person name="Batalov S."/>
            <person name="Forrest A.R."/>
            <person name="Zavolan M."/>
            <person name="Davis M.J."/>
            <person name="Wilming L.G."/>
            <person name="Aidinis V."/>
            <person name="Allen J.E."/>
            <person name="Ambesi-Impiombato A."/>
            <person name="Apweiler R."/>
            <person name="Aturaliya R.N."/>
            <person name="Bailey T.L."/>
            <person name="Bansal M."/>
            <person name="Baxter L."/>
            <person name="Beisel K.W."/>
            <person name="Bersano T."/>
            <person name="Bono H."/>
            <person name="Chalk A.M."/>
            <person name="Chiu K.P."/>
            <person name="Choudhary V."/>
            <person name="Christoffels A."/>
            <person name="Clutterbuck D.R."/>
            <person name="Crowe M.L."/>
            <person name="Dalla E."/>
            <person name="Dalrymple B.P."/>
            <person name="de Bono B."/>
            <person name="Della Gatta G."/>
            <person name="di Bernardo D."/>
            <person name="Down T."/>
            <person name="Engstrom P."/>
            <person name="Fagiolini M."/>
            <person name="Faulkner G."/>
            <person name="Fletcher C.F."/>
            <person name="Fukushima T."/>
            <person name="Furuno M."/>
            <person name="Futaki S."/>
            <person name="Gariboldi M."/>
            <person name="Georgii-Hemming P."/>
            <person name="Gingeras T.R."/>
            <person name="Gojobori T."/>
            <person name="Green R.E."/>
            <person name="Gustincich S."/>
            <person name="Harbers M."/>
            <person name="Hayashi Y."/>
            <person name="Hensch T.K."/>
            <person name="Hirokawa N."/>
            <person name="Hill D."/>
            <person name="Huminiecki L."/>
            <person name="Iacono M."/>
            <person name="Ikeo K."/>
            <person name="Iwama A."/>
            <person name="Ishikawa T."/>
            <person name="Jakt M."/>
            <person name="Kanapin A."/>
            <person name="Katoh M."/>
            <person name="Kawasawa Y."/>
            <person name="Kelso J."/>
            <person name="Kitamura H."/>
            <person name="Kitano H."/>
            <person name="Kollias G."/>
            <person name="Krishnan S.P."/>
            <person name="Kruger A."/>
            <person name="Kummerfeld S.K."/>
            <person name="Kurochkin I.V."/>
            <person name="Lareau L.F."/>
            <person name="Lazarevic D."/>
            <person name="Lipovich L."/>
            <person name="Liu J."/>
            <person name="Liuni S."/>
            <person name="McWilliam S."/>
            <person name="Madan Babu M."/>
            <person name="Madera M."/>
            <person name="Marchionni L."/>
            <person name="Matsuda H."/>
            <person name="Matsuzawa S."/>
            <person name="Miki H."/>
            <person name="Mignone F."/>
            <person name="Miyake S."/>
            <person name="Morris K."/>
            <person name="Mottagui-Tabar S."/>
            <person name="Mulder N."/>
            <person name="Nakano N."/>
            <person name="Nakauchi H."/>
            <person name="Ng P."/>
            <person name="Nilsson R."/>
            <person name="Nishiguchi S."/>
            <person name="Nishikawa S."/>
            <person name="Nori F."/>
            <person name="Ohara O."/>
            <person name="Okazaki Y."/>
            <person name="Orlando V."/>
            <person name="Pang K.C."/>
            <person name="Pavan W.J."/>
            <person name="Pavesi G."/>
            <person name="Pesole G."/>
            <person name="Petrovsky N."/>
            <person name="Piazza S."/>
            <person name="Reed J."/>
            <person name="Reid J.F."/>
            <person name="Ring B.Z."/>
            <person name="Ringwald M."/>
            <person name="Rost B."/>
            <person name="Ruan Y."/>
            <person name="Salzberg S.L."/>
            <person name="Sandelin A."/>
            <person name="Schneider C."/>
            <person name="Schoenbach C."/>
            <person name="Sekiguchi K."/>
            <person name="Semple C.A."/>
            <person name="Seno S."/>
            <person name="Sessa L."/>
            <person name="Sheng Y."/>
            <person name="Shibata Y."/>
            <person name="Shimada H."/>
            <person name="Shimada K."/>
            <person name="Silva D."/>
            <person name="Sinclair B."/>
            <person name="Sperling S."/>
            <person name="Stupka E."/>
            <person name="Sugiura K."/>
            <person name="Sultana R."/>
            <person name="Takenaka Y."/>
            <person name="Taki K."/>
            <person name="Tammoja K."/>
            <person name="Tan S.L."/>
            <person name="Tang S."/>
            <person name="Taylor M.S."/>
            <person name="Tegner J."/>
            <person name="Teichmann S.A."/>
            <person name="Ueda H.R."/>
            <person name="van Nimwegen E."/>
            <person name="Verardo R."/>
            <person name="Wei C.L."/>
            <person name="Yagi K."/>
            <person name="Yamanishi H."/>
            <person name="Zabarovsky E."/>
            <person name="Zhu S."/>
            <person name="Zimmer A."/>
            <person name="Hide W."/>
            <person name="Bult C."/>
            <person name="Grimmond S.M."/>
            <person name="Teasdale R.D."/>
            <person name="Liu E.T."/>
            <person name="Brusic V."/>
            <person name="Quackenbush J."/>
            <person name="Wahlestedt C."/>
            <person name="Mattick J.S."/>
            <person name="Hume D.A."/>
            <person name="Kai C."/>
            <person name="Sasaki D."/>
            <person name="Tomaru Y."/>
            <person name="Fukuda S."/>
            <person name="Kanamori-Katayama M."/>
            <person name="Suzuki M."/>
            <person name="Aoki J."/>
            <person name="Arakawa T."/>
            <person name="Iida J."/>
            <person name="Imamura K."/>
            <person name="Itoh M."/>
            <person name="Kato T."/>
            <person name="Kawaji H."/>
            <person name="Kawagashira N."/>
            <person name="Kawashima T."/>
            <person name="Kojima M."/>
            <person name="Kondo S."/>
            <person name="Konno H."/>
            <person name="Nakano K."/>
            <person name="Ninomiya N."/>
            <person name="Nishio T."/>
            <person name="Okada M."/>
            <person name="Plessy C."/>
            <person name="Shibata K."/>
            <person name="Shiraki T."/>
            <person name="Suzuki S."/>
            <person name="Tagami M."/>
            <person name="Waki K."/>
            <person name="Watahiki A."/>
            <person name="Okamura-Oho Y."/>
            <person name="Suzuki H."/>
            <person name="Kawai J."/>
            <person name="Hayashizaki Y."/>
        </authorList>
    </citation>
    <scope>NUCLEOTIDE SEQUENCE [LARGE SCALE MRNA]</scope>
    <source>
        <strain>C57BL/6J</strain>
        <tissue>Cecum</tissue>
        <tissue>Corpora quadrigemina</tissue>
        <tissue>Oviduct</tissue>
        <tissue>Thymus</tissue>
    </source>
</reference>
<reference key="3">
    <citation type="journal article" date="2004" name="Genome Res.">
        <title>The status, quality, and expansion of the NIH full-length cDNA project: the Mammalian Gene Collection (MGC).</title>
        <authorList>
            <consortium name="The MGC Project Team"/>
        </authorList>
    </citation>
    <scope>NUCLEOTIDE SEQUENCE [LARGE SCALE MRNA]</scope>
    <source>
        <tissue>Hematopoietic</tissue>
        <tissue>Mammary gland</tissue>
    </source>
</reference>
<reference key="4">
    <citation type="journal article" date="2000" name="J. Biol. Chem.">
        <title>Chat, a Cas/HEF1-associated adaptor protein that integrates multiple signaling pathways.</title>
        <authorList>
            <person name="Sakakibara A."/>
            <person name="Hattori S."/>
        </authorList>
    </citation>
    <scope>INTERACTION WITH SH2D3C</scope>
</reference>
<reference key="5">
    <citation type="journal article" date="2003" name="J. Immunol.">
        <title>The GDP exchange factor AND-34 is expressed in B cells, associates with HEF1, and activates Cdc42.</title>
        <authorList>
            <person name="Cai D."/>
            <person name="Felekkis K.N."/>
            <person name="Near R.I."/>
            <person name="O'Neill G.M."/>
            <person name="van Seventer J.M."/>
            <person name="Golemis E.A."/>
            <person name="Lerner A."/>
        </authorList>
    </citation>
    <scope>INTERACTION WITH BCAR3</scope>
</reference>
<reference key="6">
    <citation type="journal article" date="2005" name="J. Immunol.">
        <title>Crk-associated substrate lymphocyte type is required for lymphocyte trafficking and marginal zone B cell maintenance.</title>
        <authorList>
            <person name="Seo S."/>
            <person name="Asai T."/>
            <person name="Saito T."/>
            <person name="Suzuki T."/>
            <person name="Morishita Y."/>
            <person name="Nakamoto T."/>
            <person name="Ichikawa M."/>
            <person name="Yamamoto G."/>
            <person name="Kawazu M."/>
            <person name="Yamagata T."/>
            <person name="Sakai R."/>
            <person name="Mitani K."/>
            <person name="Ogawa S."/>
            <person name="Kurokawa M."/>
            <person name="Chiba S."/>
            <person name="Hirai H."/>
        </authorList>
    </citation>
    <scope>FUNCTION</scope>
    <scope>TISSUE SPECIFICITY</scope>
    <scope>DISRUPTION PHENOTYPE</scope>
</reference>
<reference key="7">
    <citation type="journal article" date="2006" name="Immunity">
        <title>The hematopoietic isoform of Cas-Hef1-associated signal transducer regulates chemokine-induced inside-out signaling and T cell trafficking.</title>
        <authorList>
            <person name="Regelmann A.G."/>
            <person name="Danzl N.M."/>
            <person name="Wanjalla C."/>
            <person name="Alexandropoulos K."/>
        </authorList>
    </citation>
    <scope>FUNCTION</scope>
    <scope>INTERACTION WITH SH2D3C</scope>
</reference>
<reference key="8">
    <citation type="journal article" date="2009" name="J. Mol. Biol.">
        <title>Structural insights into the association between BCAR3 and Cas family members, an atypical complex implicated in anti-oestrogen resistance.</title>
        <authorList>
            <person name="Garron M.L."/>
            <person name="Arsenieva D."/>
            <person name="Zhong J."/>
            <person name="Bloom A.B."/>
            <person name="Lerner A."/>
            <person name="O'Neill G.M."/>
            <person name="Arold S.T."/>
        </authorList>
    </citation>
    <scope>INTERACTION WITH BCAR3</scope>
</reference>
<reference key="9">
    <citation type="journal article" date="2009" name="Mol. Vis.">
        <title>Loss of AND-34/BCAR3 expression in mice results in rupture of the adult lens.</title>
        <authorList>
            <person name="Near R.I."/>
            <person name="Smith R.S."/>
            <person name="Toselli P.A."/>
            <person name="Freddo T.F."/>
            <person name="Bloom A.B."/>
            <person name="Vanden Borre P."/>
            <person name="Seldin D.C."/>
            <person name="Lerner A."/>
        </authorList>
    </citation>
    <scope>TISSUE SPECIFICITY</scope>
</reference>
<reference key="10">
    <citation type="journal article" date="2010" name="Cell">
        <title>A tissue-specific atlas of mouse protein phosphorylation and expression.</title>
        <authorList>
            <person name="Huttlin E.L."/>
            <person name="Jedrychowski M.P."/>
            <person name="Elias J.E."/>
            <person name="Goswami T."/>
            <person name="Rad R."/>
            <person name="Beausoleil S.A."/>
            <person name="Villen J."/>
            <person name="Haas W."/>
            <person name="Sowa M.E."/>
            <person name="Gygi S.P."/>
        </authorList>
    </citation>
    <scope>PHOSPHORYLATION [LARGE SCALE ANALYSIS] AT SER-295</scope>
    <scope>IDENTIFICATION BY MASS SPECTROMETRY [LARGE SCALE ANALYSIS]</scope>
    <source>
        <tissue>Spleen</tissue>
    </source>
</reference>
<reference key="11">
    <citation type="journal article" date="2014" name="J. Biol. Chem.">
        <title>Src kinase determines the dynamic exchange of the docking protein NEDD9 (neural precursor cell expressed developmentally down-regulated gene 9) at focal adhesions.</title>
        <authorList>
            <person name="Bradbury P."/>
            <person name="Bach C.T."/>
            <person name="Paul A."/>
            <person name="O'Neill G.M."/>
        </authorList>
    </citation>
    <scope>FUNCTION</scope>
    <scope>INTERACTION WITH PTK2</scope>
    <scope>SUBCELLULAR LOCATION</scope>
</reference>
<reference key="12">
    <citation type="journal article" date="2014" name="Mol. Cancer Res.">
        <title>NEDD9 regulates actin dynamics through cortactin deacetylation in an AURKA/HDAC6-dependent manner.</title>
        <authorList>
            <person name="Kozyreva V.K."/>
            <person name="McLaughlin S.L."/>
            <person name="Livengood R.H."/>
            <person name="Calkins R.A."/>
            <person name="Kelley L.C."/>
            <person name="Rajulapati A."/>
            <person name="Ice R.J."/>
            <person name="Smolkin M.B."/>
            <person name="Weed S.A."/>
            <person name="Pugacheva E.N."/>
        </authorList>
    </citation>
    <scope>INTERACTION WITH CTTN</scope>
</reference>
<reference key="13">
    <citation type="journal article" date="2016" name="Brain Res.">
        <title>Mice null for NEDD9 (HEF1alpha) display extensive hippocampal dendritic spine loss and cognitive impairment.</title>
        <authorList>
            <person name="Knutson D.C."/>
            <person name="Mitzey A.M."/>
            <person name="Talton L.E."/>
            <person name="Clagett-Dame M."/>
        </authorList>
    </citation>
    <scope>FUNCTION</scope>
    <scope>TISSUE SPECIFICITY</scope>
    <scope>DISRUPTION PHENOTYPE</scope>
</reference>
<reference key="14">
    <citation type="journal article" date="2016" name="Immunol. Cell Biol.">
        <title>Actin polymerization-dependent activation of Cas-L promotes immunological synapse stability.</title>
        <authorList>
            <person name="Santos L.C."/>
            <person name="Blair D.A."/>
            <person name="Kumari S."/>
            <person name="Cammer M."/>
            <person name="Iskratsch T."/>
            <person name="Herbin O."/>
            <person name="Alexandropoulos K."/>
            <person name="Dustin M.L."/>
            <person name="Sheetz M.P."/>
        </authorList>
    </citation>
    <scope>FUNCTION</scope>
    <scope>TISSUE SPECIFICITY</scope>
    <scope>PHOSPHORYLATION</scope>
    <scope>DISRUPTION PHENOTYPE</scope>
</reference>
<reference key="15">
    <citation type="journal article" date="2016" name="PLoS ONE">
        <title>Identification of Nedd9 as a TGF-beta-Smad2/3 Target Gene Involved in RANKL-Induced Osteoclastogenesis by Comprehensive Analysis.</title>
        <authorList>
            <person name="Omata Y."/>
            <person name="Nakamura S."/>
            <person name="Koyama T."/>
            <person name="Yasui T."/>
            <person name="Hirose J."/>
            <person name="Izawa N."/>
            <person name="Matsumoto T."/>
            <person name="Imai Y."/>
            <person name="Seo S."/>
            <person name="Kurokawa M."/>
            <person name="Tsutsumi S."/>
            <person name="Kadono Y."/>
            <person name="Morimoto C."/>
            <person name="Aburatani H."/>
            <person name="Miyamoto T."/>
            <person name="Tanaka S."/>
        </authorList>
    </citation>
    <scope>FUNCTION</scope>
    <scope>INDUCTION BY TGF-BETA</scope>
    <scope>DISRUPTION PHENOTYPE</scope>
</reference>
<reference key="16">
    <citation type="journal article" date="2018" name="J. Biol. Chem.">
        <title>Phosphorylation of human enhancer filamentation 1 (HEF1) stimulates interaction with Polo-like kinase 1 leading to HEF1 localization to focal adhesions.</title>
        <authorList>
            <person name="Lee K.H."/>
            <person name="Hwang J.A."/>
            <person name="Kim S.O."/>
            <person name="Kim J.H."/>
            <person name="Shin S.C."/>
            <person name="Kim E.E."/>
            <person name="Lee K.S."/>
            <person name="Rhee K."/>
            <person name="Jeon B.H."/>
            <person name="Bang J.K."/>
            <person name="Cha-Molstad H."/>
            <person name="Soung N.K."/>
            <person name="Jang J.H."/>
            <person name="Ko S.K."/>
            <person name="Lee H.G."/>
            <person name="Ahn J.S."/>
            <person name="Kwon Y.T."/>
            <person name="Kim B.Y."/>
        </authorList>
    </citation>
    <scope>INTERACTION WITH PLK1</scope>
</reference>
<feature type="chain" id="PRO_0000089329" description="Enhancer of filamentation 1">
    <location>
        <begin position="1"/>
        <end position="833"/>
    </location>
</feature>
<feature type="domain" description="SH3" evidence="3">
    <location>
        <begin position="3"/>
        <end position="65"/>
    </location>
</feature>
<feature type="region of interest" description="Disordered" evidence="4">
    <location>
        <begin position="237"/>
        <end position="258"/>
    </location>
</feature>
<feature type="region of interest" description="Disordered" evidence="4">
    <location>
        <begin position="297"/>
        <end position="316"/>
    </location>
</feature>
<feature type="region of interest" description="Disordered" evidence="4">
    <location>
        <begin position="326"/>
        <end position="403"/>
    </location>
</feature>
<feature type="region of interest" description="Interacts with CTTN" evidence="2">
    <location>
        <begin position="350"/>
        <end position="833"/>
    </location>
</feature>
<feature type="region of interest" description="Disordered" evidence="4">
    <location>
        <begin position="560"/>
        <end position="623"/>
    </location>
</feature>
<feature type="region of interest" description="Required for interaction with PLK1" evidence="2">
    <location>
        <begin position="709"/>
        <end position="833"/>
    </location>
</feature>
<feature type="region of interest" description="Divergent helix-loop-helix motif">
    <location>
        <begin position="709"/>
        <end position="759"/>
    </location>
</feature>
<feature type="short sequence motif" description="Caspase cleavage related site" evidence="2">
    <location>
        <begin position="359"/>
        <end position="362"/>
    </location>
</feature>
<feature type="compositionally biased region" description="Basic and acidic residues" evidence="4">
    <location>
        <begin position="248"/>
        <end position="258"/>
    </location>
</feature>
<feature type="compositionally biased region" description="Polar residues" evidence="4">
    <location>
        <begin position="304"/>
        <end position="314"/>
    </location>
</feature>
<feature type="compositionally biased region" description="Basic and acidic residues" evidence="4">
    <location>
        <begin position="331"/>
        <end position="343"/>
    </location>
</feature>
<feature type="compositionally biased region" description="Low complexity" evidence="4">
    <location>
        <begin position="368"/>
        <end position="396"/>
    </location>
</feature>
<feature type="compositionally biased region" description="Polar residues" evidence="4">
    <location>
        <begin position="564"/>
        <end position="586"/>
    </location>
</feature>
<feature type="modified residue" description="Phosphotyrosine" evidence="2">
    <location>
        <position position="91"/>
    </location>
</feature>
<feature type="modified residue" description="Phosphotyrosine" evidence="2">
    <location>
        <position position="163"/>
    </location>
</feature>
<feature type="modified residue" description="Phosphotyrosine" evidence="2">
    <location>
        <position position="165"/>
    </location>
</feature>
<feature type="modified residue" description="Phosphotyrosine" evidence="2">
    <location>
        <position position="176"/>
    </location>
</feature>
<feature type="modified residue" description="Phosphotyrosine" evidence="2">
    <location>
        <position position="188"/>
    </location>
</feature>
<feature type="modified residue" description="Phosphotyrosine" evidence="2">
    <location>
        <position position="213"/>
    </location>
</feature>
<feature type="modified residue" description="Phosphotyrosine" evidence="2">
    <location>
        <position position="222"/>
    </location>
</feature>
<feature type="modified residue" description="Phosphoserine" evidence="22">
    <location>
        <position position="295"/>
    </location>
</feature>
<feature type="modified residue" description="Phosphotyrosine" evidence="2">
    <location>
        <position position="316"/>
    </location>
</feature>
<feature type="modified residue" description="Phosphoserine" evidence="2">
    <location>
        <position position="368"/>
    </location>
</feature>
<feature type="modified residue" description="Phosphoserine" evidence="2">
    <location>
        <position position="779"/>
    </location>
</feature>
<feature type="modified residue" description="Phosphothreonine" evidence="2">
    <location>
        <position position="803"/>
    </location>
</feature>
<feature type="sequence conflict" description="In Ref. 2; BAC35682/BAC32689/BAC28451." evidence="19" ref="2">
    <original>WAR</original>
    <variation>KYK</variation>
    <location>
        <begin position="2"/>
        <end position="4"/>
    </location>
</feature>
<feature type="sequence conflict" description="In Ref. 2; BAC32689." evidence="19" ref="2">
    <original>V</original>
    <variation>A</variation>
    <location>
        <position position="55"/>
    </location>
</feature>
<feature type="sequence conflict" description="In Ref. 1; AAB71663." evidence="19" ref="1">
    <original>PE</original>
    <variation>QN</variation>
    <location>
        <begin position="126"/>
        <end position="127"/>
    </location>
</feature>
<feature type="sequence conflict" description="In Ref. 1; AAB71663." evidence="19" ref="1">
    <original>V</original>
    <variation>F</variation>
    <location>
        <position position="137"/>
    </location>
</feature>
<feature type="sequence conflict" description="In Ref. 2; BAC32689." evidence="19" ref="2">
    <original>L</original>
    <variation>V</variation>
    <location>
        <position position="149"/>
    </location>
</feature>
<feature type="sequence conflict" description="In Ref. 1; AAB71663." evidence="19" ref="1">
    <original>H</original>
    <variation>L</variation>
    <location>
        <position position="161"/>
    </location>
</feature>
<feature type="sequence conflict" description="In Ref. 2; BAC27203." evidence="19" ref="2">
    <original>S</original>
    <variation>N</variation>
    <location>
        <position position="313"/>
    </location>
</feature>
<feature type="sequence conflict" description="In Ref. 1; AAB71663." evidence="19" ref="1">
    <original>K</original>
    <variation>S</variation>
    <location>
        <position position="485"/>
    </location>
</feature>
<feature type="sequence conflict" description="In Ref. 1; AAB71663." evidence="19" ref="1">
    <original>DLN</original>
    <variation>ELD</variation>
    <location>
        <begin position="504"/>
        <end position="506"/>
    </location>
</feature>
<feature type="sequence conflict" description="In Ref. 1; AAB71663." evidence="19" ref="1">
    <original>D</original>
    <variation>G</variation>
    <location>
        <position position="526"/>
    </location>
</feature>
<feature type="sequence conflict" description="In Ref. 2; BAC35682." evidence="19" ref="2">
    <original>P</original>
    <variation>A</variation>
    <location>
        <position position="604"/>
    </location>
</feature>
<feature type="sequence conflict" description="In Ref. 2; BAC32689." evidence="19" ref="2">
    <original>P</original>
    <variation>Q</variation>
    <location>
        <position position="612"/>
    </location>
</feature>
<feature type="sequence conflict" description="In Ref. 1; AAB71663." evidence="19" ref="1">
    <original>E</original>
    <variation>A</variation>
    <location>
        <position position="650"/>
    </location>
</feature>
<feature type="sequence conflict" description="In Ref. 2; BAC32689." evidence="19" ref="2">
    <original>K</original>
    <variation>R</variation>
    <location>
        <position position="685"/>
    </location>
</feature>
<feature type="sequence conflict" description="In Ref. 1; AAB71663." evidence="19" ref="1">
    <original>SS</original>
    <variation>TP</variation>
    <location>
        <begin position="733"/>
        <end position="734"/>
    </location>
</feature>
<accession>O35177</accession>
<accession>Q8BJL8</accession>
<accession>Q8BK90</accession>
<accession>Q8BL52</accession>
<accession>Q8BM94</accession>
<accession>Q8BMI9</accession>
<accession>Q99KE7</accession>
<name>CASL_MOUSE</name>
<evidence type="ECO:0000250" key="1">
    <source>
        <dbReference type="UniProtKB" id="A0A8I3PDQ1"/>
    </source>
</evidence>
<evidence type="ECO:0000250" key="2">
    <source>
        <dbReference type="UniProtKB" id="Q14511"/>
    </source>
</evidence>
<evidence type="ECO:0000255" key="3">
    <source>
        <dbReference type="PROSITE-ProRule" id="PRU00192"/>
    </source>
</evidence>
<evidence type="ECO:0000256" key="4">
    <source>
        <dbReference type="SAM" id="MobiDB-lite"/>
    </source>
</evidence>
<evidence type="ECO:0000269" key="5">
    <source>
    </source>
</evidence>
<evidence type="ECO:0000269" key="6">
    <source>
    </source>
</evidence>
<evidence type="ECO:0000269" key="7">
    <source>
    </source>
</evidence>
<evidence type="ECO:0000269" key="8">
    <source>
    </source>
</evidence>
<evidence type="ECO:0000269" key="9">
    <source>
    </source>
</evidence>
<evidence type="ECO:0000269" key="10">
    <source>
    </source>
</evidence>
<evidence type="ECO:0000269" key="11">
    <source>
    </source>
</evidence>
<evidence type="ECO:0000269" key="12">
    <source>
    </source>
</evidence>
<evidence type="ECO:0000269" key="13">
    <source>
    </source>
</evidence>
<evidence type="ECO:0000269" key="14">
    <source>
    </source>
</evidence>
<evidence type="ECO:0000269" key="15">
    <source>
    </source>
</evidence>
<evidence type="ECO:0000269" key="16">
    <source>
    </source>
</evidence>
<evidence type="ECO:0000303" key="17">
    <source>
    </source>
</evidence>
<evidence type="ECO:0000303" key="18">
    <source>
    </source>
</evidence>
<evidence type="ECO:0000305" key="19"/>
<evidence type="ECO:0000312" key="20">
    <source>
        <dbReference type="EMBL" id="AAB71663.1"/>
    </source>
</evidence>
<evidence type="ECO:0000312" key="21">
    <source>
        <dbReference type="MGI" id="MGI:97302"/>
    </source>
</evidence>
<evidence type="ECO:0007744" key="22">
    <source>
    </source>
</evidence>
<organism>
    <name type="scientific">Mus musculus</name>
    <name type="common">Mouse</name>
    <dbReference type="NCBI Taxonomy" id="10090"/>
    <lineage>
        <taxon>Eukaryota</taxon>
        <taxon>Metazoa</taxon>
        <taxon>Chordata</taxon>
        <taxon>Craniata</taxon>
        <taxon>Vertebrata</taxon>
        <taxon>Euteleostomi</taxon>
        <taxon>Mammalia</taxon>
        <taxon>Eutheria</taxon>
        <taxon>Euarchontoglires</taxon>
        <taxon>Glires</taxon>
        <taxon>Rodentia</taxon>
        <taxon>Myomorpha</taxon>
        <taxon>Muroidea</taxon>
        <taxon>Muridae</taxon>
        <taxon>Murinae</taxon>
        <taxon>Mus</taxon>
        <taxon>Mus</taxon>
    </lineage>
</organism>
<protein>
    <recommendedName>
        <fullName evidence="17">Enhancer of filamentation 1</fullName>
        <shortName evidence="17">mEF1</shortName>
    </recommendedName>
    <alternativeName>
        <fullName evidence="20">CRK-associated substrate-related protein</fullName>
        <shortName evidence="18">CAS-L</shortName>
    </alternativeName>
    <alternativeName>
        <fullName evidence="21">Neural precursor cell expressed developmentally down-regulated protein 9</fullName>
        <shortName evidence="21">NEDD-9</shortName>
    </alternativeName>
    <alternativeName>
        <fullName evidence="2">p105</fullName>
    </alternativeName>
</protein>
<sequence length="833" mass="93052">MWARNLMARALYDNVPECAEELAFRKGDILTVIEQNTGGLEGWWLCSLHGRQGIVPGNRVKLLIGPVQETPGHEQPTPGPMHQTFGQQKLYQVPNSQAASRDTIYQVPPSYQNQGIYQVPTGHGTPEQDVYQVPPSVQRNIGGTNGPLLSKKVITPVRTGHGYVYEYPSRYQKDVYDVPPSHSTQGVYDIPPSSVKGPVFSVPVGEIKPQGVYDIPPTQGVYAIPPSACRDEAGLREKEYDFPPPMKQDGKPDTRPEGVYDIPPTSTKTAGKDLHIKFPCDAPGGVEPMARRHQSFSLHHAPSQLGQSGDTQSDAYDVPRGVQFLEVPTETSEKANPEERDGVYDVPLHNPADAKGSRDVVDGINRLSFSSTGSTRSNMSTSSTSSKESSLSASPSQDKRLRLDPDTAIEKLYRLQQTLEMGVCSLMSLVTTDWRCYGYMERHINEIRTAVDKVELFLREYLHFAKGALANASCLPELVLHNKMKRELQRVEDSHQILSQTSHDLNECSWSLNILAINKPQNKCDDLDRFVMVAKTVPDDAKQLTTTISTYAETLFRADPANSHLKNGPNSIMNSSEYTHPGSQMQPLHPGDYKAQVHSKPLPPSLSKDQPPDCGSSDGSERSWMDDYDYVHLQGKEEFERQQKELLEKENIMKQSKAQLEHHQLSQFQLLEQEITKPVENDISKWKPSQSLPTTNNSVGAQDRQLLCFYYDQCETHFISLLNAIDALFSCVSSAQPPRIFVAHSKFVILSAHKLVFIGDTLTRQVAAQDIRNKVRNSSNQLCEQLKTIVMATKMAALHYPSTTALQEMVHQVTDLSRNAQLFKRSLLEMATF</sequence>
<keyword id="KW-0130">Cell adhesion</keyword>
<keyword id="KW-0131">Cell cycle</keyword>
<keyword id="KW-0132">Cell division</keyword>
<keyword id="KW-0965">Cell junction</keyword>
<keyword id="KW-1003">Cell membrane</keyword>
<keyword id="KW-0966">Cell projection</keyword>
<keyword id="KW-0963">Cytoplasm</keyword>
<keyword id="KW-0206">Cytoskeleton</keyword>
<keyword id="KW-0333">Golgi apparatus</keyword>
<keyword id="KW-0341">Growth regulation</keyword>
<keyword id="KW-0472">Membrane</keyword>
<keyword id="KW-0498">Mitosis</keyword>
<keyword id="KW-0539">Nucleus</keyword>
<keyword id="KW-0597">Phosphoprotein</keyword>
<keyword id="KW-1185">Reference proteome</keyword>
<keyword id="KW-0728">SH3 domain</keyword>
<keyword id="KW-0832">Ubl conjugation</keyword>
<comment type="function">
    <text evidence="1 2 7 8 12 13 14 15">Scaffolding protein which plays a central coordinating role for tyrosine-kinase-based signaling related to cell adhesion (By similarity). As a focal adhesion protein, plays a role in embryonic fibroblast migration (PubMed:25059660). May play an important role in integrin beta-1 or B cell antigen receptor (BCR) mediated signaling in B- and T-cells. Integrin beta-1 stimulation leads to recruitment of various proteins including CRKl and SHPTP2 to the tyrosine phosphorylated form (By similarity). Promotes adhesion and migration of lymphocytes; as a result required for the correct migration of lymphocytes to the spleen and other secondary lymphoid organs (PubMed:16148091, PubMed:17174122). Plays a role in the organization of T-cell F-actin cortical cytoskeleton and the centralization of T-cell receptor microclusters at the immunological synapse (PubMed:27359298). Negatively regulates cilia outgrowth in polarized cysts (By similarity). Modulates cilia disassembly via activation of AURKA-mediated phosphorylation of HDAC6 and subsequent deacetylation of alpha-tubulin (By similarity). Positively regulates RANKL-induced osteoclastogenesis (PubMed:27336669). Required for the maintenance of hippocampal dendritic spines in the dentate gyrus and CA1 regions, thereby involved in spatial learning and memory (PubMed:26683084).</text>
</comment>
<comment type="subunit">
    <text evidence="1 2 5 6 8 9 11 12 16">Homodimer (By similarity). Forms heterodimers with BCAR1/p130cas (By similarity). Forms complexes with PTK2B/RAFTK, adapter protein CRKL and LYN kinase (By similarity). Part of a complex composed of NEDD9, AURKA and CTTN; within the complex NEDD9 acts as a scaffold protein and is required for complex formation (By similarity). Part of a ternary complex composed of SMAD3, ITCH/AIP4 and NEDD9/HEF1; within the complex NEDD9/HEF1 interacts (via N-terminus) with ITCH/AIP4 (via WW domains); the complex mediates ubiquitination and proteasomal degradation of NEDD9/HEF1 (By similarity). Interacts with SMAD3; the interaction promotes NEDD9 ubiquitination and proteasomal degradation (By similarity). Interacts with ID2 (By similarity). Interacts with CTTN (via N-terminus) (PubMed:24574519). Interacts with MICAL (By similarity). Interacts with TXNL4/DIM1 (By similarity). Interacts with BCAR3 (via Ras-GEF domain) (PubMed:12517963, PubMed:19103205). Interacts with SH2D3C isoform 1 and isoform 2 (PubMed:10692442, PubMed:17174122). Interacts with ECT2 (By similarity). Interacts with PTPN11/SHP-2 (via SH2 domains); the interaction is enhanced when NEDD9/CAS-L is tyrosine phosphorylated (By similarity). Interacts (via C-terminus) with PLK1 (via polo box domains) (PubMed:29191835). Interacts with NKX2-5 (By similarity). Interacts with SMAD3; the interaction is inhibited by oxidation of NEDD9 (By similarity). Interacts with NEDD9/HEF1; interaction is induced by CXCL12 promotion of ABL-mediated phosphorylation of NEDD9/HEF1 (By similarity). Interacts (via SH3 domain) with PTK2/FAK (PubMed:25059660). Interacts with FYN; in the presence of PTK2 (By similarity). Interacts with INPPL1/SHIP2 (By similarity).</text>
</comment>
<comment type="interaction">
    <interactant intactId="EBI-2642891">
        <id>O35177</id>
    </interactant>
    <interactant intactId="EBI-7964037">
        <id>Q9QZS8</id>
        <label>Sh2d3c</label>
    </interactant>
    <organismsDiffer>false</organismsDiffer>
    <experiments>2</experiments>
</comment>
<comment type="subcellular location">
    <subcellularLocation>
        <location evidence="2">Cytoplasm</location>
        <location evidence="2">Cell cortex</location>
    </subcellularLocation>
    <subcellularLocation>
        <location evidence="2">Nucleus</location>
    </subcellularLocation>
    <subcellularLocation>
        <location evidence="2">Golgi apparatus</location>
    </subcellularLocation>
    <subcellularLocation>
        <location evidence="2">Cell projection</location>
        <location evidence="2">Lamellipodium</location>
    </subcellularLocation>
    <subcellularLocation>
        <location evidence="2">Cytoplasm</location>
    </subcellularLocation>
    <subcellularLocation>
        <location evidence="12">Cell junction</location>
        <location evidence="12">Focal adhesion</location>
    </subcellularLocation>
    <subcellularLocation>
        <location evidence="2">Cytoplasm</location>
        <location evidence="2">Cytoskeleton</location>
    </subcellularLocation>
    <subcellularLocation>
        <location evidence="1">Cytoplasm</location>
        <location evidence="1">Cytoskeleton</location>
        <location evidence="1">Spindle pole</location>
    </subcellularLocation>
    <subcellularLocation>
        <location evidence="2">Cell projection</location>
        <location evidence="2">Cilium</location>
    </subcellularLocation>
    <subcellularLocation>
        <location evidence="2">Cytoplasm</location>
        <location evidence="2">Cytoskeleton</location>
        <location evidence="2">Cilium basal body</location>
    </subcellularLocation>
    <subcellularLocation>
        <location evidence="1">Basolateral cell membrane</location>
    </subcellularLocation>
</comment>
<comment type="tissue specificity">
    <text evidence="7 10 13 15">Expressed in splenic lymphocytes (at protein level) (PubMed:19365570). Expressed in T-cells (at protein level) (PubMed:27359298). Expressed in the thymus (PubMed:16148091). Expressed throughout the brain however particularly abundant in the cortex and hippocampus (PubMed:26683084).</text>
</comment>
<comment type="induction">
    <text evidence="14">Induced by TGF-beta treatment in bone marrow macrophages.</text>
</comment>
<comment type="domain">
    <text evidence="2">Contains a central domain containing multiple potential SH2-binding sites and a C-terminal domain containing a divergent helix-loop-helix (HLH) motif (By similarity). The SH2-binding sites putatively bind CRKL SH2 domains (By similarity). The HLH motif confers specific interaction with the HLH protein ID2 (By similarity). It is absolutely required for the induction of pseudohyphal growth in yeast and mediates homodimerization and heterodimerization with BCAR1/p130cas (By similarity).</text>
</comment>
<comment type="PTM">
    <text evidence="2">Polyubiquitinated by ITCH/AIP4, leading to proteasomal degradation.</text>
</comment>
<comment type="PTM">
    <text evidence="2 15">PTK2/FAK1 phosphorylates the protein at the YDYVHL motif (conserved among all cas proteins) following integrin stimulation (By similarity). The SRC family kinases (FYN, SRC, LCK and CRK) are recruited to the phosphorylated sites and can phosphorylate other tyrosine residues (By similarity). Ligation of either integrin beta-1 or B-cell antigen receptor on tonsillar B-cells and B-cell lines promotes tyrosine phosphorylation and both integrin and BCR-mediated tyrosine phosphorylation requires an intact actin network (By similarity). Phosphorylation is required to recruit NEDD9 to T-cell receptor microclusters at the periphery of newly formed immunological synapses (PubMed:27359298). In fibroblasts transformation with oncogene v-ABL results in an increase in tyrosine phosphorylation. Transiently phosphorylated following CD3 cross-linking and this phosphorylated form binds to CRKL and C3G (By similarity). A mutant lacking the SH3 domain is phosphorylated upon CD3 cross-linking but not upon integrin beta-1 cross-linking. Tyrosine phosphorylation occurs upon stimulation of the G-protein coupled C1a calcitonin receptor. Calcitonin-stimulated tyrosine phosphorylation is mediated by calcium- and protein kinase C-dependent mechanisms and requires the integrity of the actin cytoskeleton. Phosphorylation at Ser-368 induces proteasomal degradation (By similarity). Phosphorylated by LYN (By similarity). Phosphorylation at Ser-779 by CSNK1D or CSNK1E, or phosphorylation of Thr-803 by CSNK1E enhances the interaction of NEDD9 with PLK1 (By similarity).</text>
</comment>
<comment type="disruption phenotype">
    <text evidence="7 13 14 15">Knockout mice are morphologically normal and fertile, however take an increased amount of time to learn new spatial memories (PubMed:26683084). Reduced dendritic spine density in the dentate gyrus and both the basal and apical CA1 regions of the hippocampus, with additional decreased in apical dendrite length (PubMed:26683084). The difference in dendritic spine density becomes more pronounced with age (PubMed:26683084). Reduced numbers of osteoclasts in bone marrow macrophages, however overall displayed a normal skeletal phenotype (PubMed:27336669). Abolishes ICAM1 distribution at the pericentral ring of the immunological synapse of T-cells (PubMed:27359298). Impaired movement of T-cell receptor (TCR) microclusters from the synapse periphery to the central region and a decrease in TCR microcluster maturation (PubMed:27359298). Decreased Ca(2+) release from intracellular stores and decreased PLCG1 activation during synapse formation. T-cells failed to form stable immunological synapses, tended to polarize and exhibited uncoordinated, slow migration resulting in significantly smaller synapse area (PubMed:27359298). T-cells show a disorganized cortical actin network, smaller lamellipodial area and undefined lamella boundaries (PubMed:27359298). Decreased splenic follicular and marginal zone B-cells (MZB), however MZB cells were more significantly affected, leading to a decrease in phosphorylcholine-specific IgM and IgG2a (PubMed:16148091). Reduced chemotaxis of T-cells and follicular B-cells in response to CXCL12 and CXCL13 and reduced cell adhesion in response to the integrin ligands VCAM1 and ICAM1 (PubMed:16148091). Decreased number of homing B- and T-cells in the spleen, lymph nodes and peripheral blood, with elevated B-cells in the peripheral blood (PubMed:16148091).</text>
</comment>
<comment type="similarity">
    <text evidence="19">Belongs to the CAS family.</text>
</comment>
<proteinExistence type="evidence at protein level"/>
<gene>
    <name evidence="21" type="primary">Nedd9</name>
    <name evidence="21" type="synonym">Casl</name>
</gene>